<evidence type="ECO:0000250" key="1"/>
<evidence type="ECO:0000305" key="2"/>
<dbReference type="EMBL" id="GQ918271">
    <property type="protein sequence ID" value="ADB08412.1"/>
    <property type="molecule type" value="mRNA"/>
</dbReference>
<dbReference type="SMR" id="D2X5W4"/>
<dbReference type="TCDB" id="1.C.85.4.2">
    <property type="family name" value="the pore-forming Beta-defensin (Beta-defensin) family"/>
</dbReference>
<dbReference type="GO" id="GO:0005615">
    <property type="term" value="C:extracellular space"/>
    <property type="evidence" value="ECO:0007669"/>
    <property type="project" value="TreeGrafter"/>
</dbReference>
<dbReference type="GO" id="GO:0031731">
    <property type="term" value="F:CCR6 chemokine receptor binding"/>
    <property type="evidence" value="ECO:0007669"/>
    <property type="project" value="TreeGrafter"/>
</dbReference>
<dbReference type="GO" id="GO:0042056">
    <property type="term" value="F:chemoattractant activity"/>
    <property type="evidence" value="ECO:0007669"/>
    <property type="project" value="TreeGrafter"/>
</dbReference>
<dbReference type="GO" id="GO:0090729">
    <property type="term" value="F:toxin activity"/>
    <property type="evidence" value="ECO:0007669"/>
    <property type="project" value="UniProtKB-KW"/>
</dbReference>
<dbReference type="GO" id="GO:0060326">
    <property type="term" value="P:cell chemotaxis"/>
    <property type="evidence" value="ECO:0007669"/>
    <property type="project" value="TreeGrafter"/>
</dbReference>
<dbReference type="GO" id="GO:0042742">
    <property type="term" value="P:defense response to bacterium"/>
    <property type="evidence" value="ECO:0007669"/>
    <property type="project" value="TreeGrafter"/>
</dbReference>
<dbReference type="InterPro" id="IPR001855">
    <property type="entry name" value="Defensin_beta-like"/>
</dbReference>
<dbReference type="PANTHER" id="PTHR20515">
    <property type="entry name" value="BETA-DEFENSIN"/>
    <property type="match status" value="1"/>
</dbReference>
<dbReference type="PANTHER" id="PTHR20515:SF0">
    <property type="entry name" value="BETA-DEFENSIN 103"/>
    <property type="match status" value="1"/>
</dbReference>
<dbReference type="Pfam" id="PF00711">
    <property type="entry name" value="Defensin_beta"/>
    <property type="match status" value="1"/>
</dbReference>
<dbReference type="SUPFAM" id="SSF57392">
    <property type="entry name" value="Defensin-like"/>
    <property type="match status" value="2"/>
</dbReference>
<keyword id="KW-0677">Repeat</keyword>
<keyword id="KW-0964">Secreted</keyword>
<keyword id="KW-0732">Signal</keyword>
<keyword id="KW-0800">Toxin</keyword>
<sequence length="182" mass="19456">MQMDWLFIAVISGIGLLSSGVPGTQGAYTTEQCRALNGSCNFYACFPKNVIIGKCDWWGWSCCARTPLERCTAKKGTCTKTGCTKTDTDHGPCDGGAQCCQRDPVKYCKFHGNVCGRGKCPMDHIPIGECTPGYPCCKRDGPAYCKSKGGKCLNRCPQIVPTNVIGVCATGVPCCKSRQSTG</sequence>
<protein>
    <recommendedName>
        <fullName>Helofensin-3</fullName>
    </recommendedName>
    <alternativeName>
        <fullName>Lethal toxin 3</fullName>
    </alternativeName>
</protein>
<feature type="signal peptide" evidence="1">
    <location>
        <begin position="1"/>
        <end position="26"/>
    </location>
</feature>
<feature type="chain" id="PRO_0000414108" description="Helofensin-3">
    <location>
        <begin position="27"/>
        <end position="182"/>
    </location>
</feature>
<feature type="repeat" description="C(6)C(4)C(9)C(6)CC 1; approximate">
    <location>
        <begin position="27"/>
        <end position="64"/>
    </location>
</feature>
<feature type="repeat" description="C(6)C(4)C(9)C(6)CC 2; approximate">
    <location>
        <begin position="65"/>
        <end position="101"/>
    </location>
</feature>
<feature type="repeat" description="C(6)C(4)C(9)C(6)CC 3; approximate">
    <location>
        <begin position="102"/>
        <end position="138"/>
    </location>
</feature>
<feature type="repeat" description="C(6)C(4)C(9)C(6)CC 4; approximate">
    <location>
        <begin position="139"/>
        <end position="176"/>
    </location>
</feature>
<organism>
    <name type="scientific">Heloderma suspectum cinctum</name>
    <name type="common">Banded Gila monster</name>
    <dbReference type="NCBI Taxonomy" id="537493"/>
    <lineage>
        <taxon>Eukaryota</taxon>
        <taxon>Metazoa</taxon>
        <taxon>Chordata</taxon>
        <taxon>Craniata</taxon>
        <taxon>Vertebrata</taxon>
        <taxon>Euteleostomi</taxon>
        <taxon>Lepidosauria</taxon>
        <taxon>Squamata</taxon>
        <taxon>Bifurcata</taxon>
        <taxon>Unidentata</taxon>
        <taxon>Episquamata</taxon>
        <taxon>Toxicofera</taxon>
        <taxon>Anguimorpha</taxon>
        <taxon>Neoanguimorpha</taxon>
        <taxon>Helodermatidae</taxon>
        <taxon>Heloderma</taxon>
    </lineage>
</organism>
<comment type="function">
    <text evidence="1">Lethal toxin which possesses an inhibitory effect on direct electrical stimulation of the isolated hemi-diaphragm of mice. Neither hemorrhagic nor hemolytic activities are detected. Phospholipase A2 activity, proteolytic activity and arginine esterolytic activity are absent (By similarity).</text>
</comment>
<comment type="subcellular location">
    <subcellularLocation>
        <location evidence="1">Secreted</location>
    </subcellularLocation>
</comment>
<comment type="tissue specificity">
    <text>Expressed by the mandibular venom gland.</text>
</comment>
<comment type="similarity">
    <text evidence="2">Belongs to the beta-defensin family. Helofensin subfamily.</text>
</comment>
<proteinExistence type="evidence at transcript level"/>
<accession>D2X5W4</accession>
<name>LETH3_HELSC</name>
<reference key="1">
    <citation type="journal article" date="2010" name="Mol. Biol. Evol.">
        <title>Novel venom proteins produced by differential domain-expression strategies in beaded lizards and gila monsters (genus Heloderma).</title>
        <authorList>
            <person name="Fry B.G."/>
            <person name="Roelants K."/>
            <person name="Winter K."/>
            <person name="Hodgson W.C."/>
            <person name="Griesman L."/>
            <person name="Kwok H.F."/>
            <person name="Scanlon D."/>
            <person name="Karas J."/>
            <person name="Shaw C."/>
            <person name="Wong L."/>
            <person name="Norman J.A."/>
        </authorList>
    </citation>
    <scope>NUCLEOTIDE SEQUENCE [MRNA]</scope>
    <source>
        <tissue>Venom gland</tissue>
    </source>
</reference>